<feature type="chain" id="PRO_0000265052" description="Putative 3-methyladenine DNA glycosylase">
    <location>
        <begin position="1"/>
        <end position="202"/>
    </location>
</feature>
<sequence>MARSRVPAAASPAKLGPLLSRRFFARSVHEVAPELIGATLLVAGVGGLIVEVEAYHHTDPAAHSYGGETPRNRVMFGPPGFAYVYRSYGIHWCVNFVCEAEGSASAVLIRALAPTHGLGVMRKHRGLDDERSLCSGPGKLTQALGITIAHNGAPLDIEPFAIHRRTVEPDIGTGPRIGISKAIELPWRYGLRRSRLVSKPFK</sequence>
<protein>
    <recommendedName>
        <fullName evidence="1">Putative 3-methyladenine DNA glycosylase</fullName>
        <ecNumber evidence="1">3.2.2.-</ecNumber>
    </recommendedName>
</protein>
<name>3MGH_RHOPS</name>
<proteinExistence type="inferred from homology"/>
<organism>
    <name type="scientific">Rhodopseudomonas palustris (strain BisB5)</name>
    <dbReference type="NCBI Taxonomy" id="316057"/>
    <lineage>
        <taxon>Bacteria</taxon>
        <taxon>Pseudomonadati</taxon>
        <taxon>Pseudomonadota</taxon>
        <taxon>Alphaproteobacteria</taxon>
        <taxon>Hyphomicrobiales</taxon>
        <taxon>Nitrobacteraceae</taxon>
        <taxon>Rhodopseudomonas</taxon>
    </lineage>
</organism>
<evidence type="ECO:0000255" key="1">
    <source>
        <dbReference type="HAMAP-Rule" id="MF_00527"/>
    </source>
</evidence>
<keyword id="KW-0227">DNA damage</keyword>
<keyword id="KW-0234">DNA repair</keyword>
<keyword id="KW-0378">Hydrolase</keyword>
<gene>
    <name type="ordered locus">RPD_2583</name>
</gene>
<dbReference type="EC" id="3.2.2.-" evidence="1"/>
<dbReference type="EMBL" id="CP000283">
    <property type="protein sequence ID" value="ABE39812.1"/>
    <property type="molecule type" value="Genomic_DNA"/>
</dbReference>
<dbReference type="SMR" id="Q137C7"/>
<dbReference type="STRING" id="316057.RPD_2583"/>
<dbReference type="KEGG" id="rpd:RPD_2583"/>
<dbReference type="eggNOG" id="COG2094">
    <property type="taxonomic scope" value="Bacteria"/>
</dbReference>
<dbReference type="HOGENOM" id="CLU_060471_3_0_5"/>
<dbReference type="Proteomes" id="UP000001818">
    <property type="component" value="Chromosome"/>
</dbReference>
<dbReference type="GO" id="GO:0003905">
    <property type="term" value="F:alkylbase DNA N-glycosylase activity"/>
    <property type="evidence" value="ECO:0007669"/>
    <property type="project" value="InterPro"/>
</dbReference>
<dbReference type="GO" id="GO:0003677">
    <property type="term" value="F:DNA binding"/>
    <property type="evidence" value="ECO:0007669"/>
    <property type="project" value="InterPro"/>
</dbReference>
<dbReference type="GO" id="GO:0006284">
    <property type="term" value="P:base-excision repair"/>
    <property type="evidence" value="ECO:0007669"/>
    <property type="project" value="InterPro"/>
</dbReference>
<dbReference type="CDD" id="cd00540">
    <property type="entry name" value="AAG"/>
    <property type="match status" value="1"/>
</dbReference>
<dbReference type="FunFam" id="3.10.300.10:FF:000001">
    <property type="entry name" value="Putative 3-methyladenine DNA glycosylase"/>
    <property type="match status" value="1"/>
</dbReference>
<dbReference type="Gene3D" id="3.10.300.10">
    <property type="entry name" value="Methylpurine-DNA glycosylase (MPG)"/>
    <property type="match status" value="1"/>
</dbReference>
<dbReference type="HAMAP" id="MF_00527">
    <property type="entry name" value="3MGH"/>
    <property type="match status" value="1"/>
</dbReference>
<dbReference type="InterPro" id="IPR011034">
    <property type="entry name" value="Formyl_transferase-like_C_sf"/>
</dbReference>
<dbReference type="InterPro" id="IPR003180">
    <property type="entry name" value="MPG"/>
</dbReference>
<dbReference type="InterPro" id="IPR036995">
    <property type="entry name" value="MPG_sf"/>
</dbReference>
<dbReference type="NCBIfam" id="TIGR00567">
    <property type="entry name" value="3mg"/>
    <property type="match status" value="1"/>
</dbReference>
<dbReference type="NCBIfam" id="NF002003">
    <property type="entry name" value="PRK00802.1-3"/>
    <property type="match status" value="1"/>
</dbReference>
<dbReference type="PANTHER" id="PTHR10429">
    <property type="entry name" value="DNA-3-METHYLADENINE GLYCOSYLASE"/>
    <property type="match status" value="1"/>
</dbReference>
<dbReference type="PANTHER" id="PTHR10429:SF0">
    <property type="entry name" value="DNA-3-METHYLADENINE GLYCOSYLASE"/>
    <property type="match status" value="1"/>
</dbReference>
<dbReference type="Pfam" id="PF02245">
    <property type="entry name" value="Pur_DNA_glyco"/>
    <property type="match status" value="1"/>
</dbReference>
<dbReference type="SUPFAM" id="SSF50486">
    <property type="entry name" value="FMT C-terminal domain-like"/>
    <property type="match status" value="1"/>
</dbReference>
<comment type="similarity">
    <text evidence="1">Belongs to the DNA glycosylase MPG family.</text>
</comment>
<reference key="1">
    <citation type="submission" date="2006-03" db="EMBL/GenBank/DDBJ databases">
        <title>Complete sequence of Rhodopseudomonas palustris BisB5.</title>
        <authorList>
            <consortium name="US DOE Joint Genome Institute"/>
            <person name="Copeland A."/>
            <person name="Lucas S."/>
            <person name="Lapidus A."/>
            <person name="Barry K."/>
            <person name="Detter J.C."/>
            <person name="Glavina del Rio T."/>
            <person name="Hammon N."/>
            <person name="Israni S."/>
            <person name="Dalin E."/>
            <person name="Tice H."/>
            <person name="Pitluck S."/>
            <person name="Chain P."/>
            <person name="Malfatti S."/>
            <person name="Shin M."/>
            <person name="Vergez L."/>
            <person name="Schmutz J."/>
            <person name="Larimer F."/>
            <person name="Land M."/>
            <person name="Hauser L."/>
            <person name="Pelletier D.A."/>
            <person name="Kyrpides N."/>
            <person name="Lykidis A."/>
            <person name="Oda Y."/>
            <person name="Harwood C.S."/>
            <person name="Richardson P."/>
        </authorList>
    </citation>
    <scope>NUCLEOTIDE SEQUENCE [LARGE SCALE GENOMIC DNA]</scope>
    <source>
        <strain>BisB5</strain>
    </source>
</reference>
<accession>Q137C7</accession>